<accession>K7EIQ3</accession>
<evidence type="ECO:0000303" key="1">
    <source>
    </source>
</evidence>
<gene>
    <name type="primary">ZNF561-AS1</name>
    <name type="synonym">C19orf82</name>
</gene>
<protein>
    <recommendedName>
        <fullName>Uncharacterized protein ZNF561-AS1</fullName>
    </recommendedName>
    <alternativeName>
        <fullName>ZNF561 antisense RNA 1</fullName>
    </alternativeName>
    <alternativeName>
        <fullName>ZNF561 antisense gene protein 1</fullName>
    </alternativeName>
</protein>
<feature type="chain" id="PRO_0000423418" description="Uncharacterized protein ZNF561-AS1">
    <location>
        <begin position="1"/>
        <end position="104"/>
    </location>
</feature>
<feature type="splice variant" id="VSP_047837" description="In isoform 2." evidence="1">
    <original>GLTLLSRLECSDVIMDHCSPQLTGLRMKGFLAQTPPLEFPVHQYQPGDHVLIKSWKRESLNQLRRTSSGTLDE</original>
    <variation>DERLPSTNTTPGVPGTSIPAWGSRSHQELEEGKLEPA</variation>
    <location>
        <begin position="32"/>
        <end position="104"/>
    </location>
</feature>
<organism>
    <name type="scientific">Homo sapiens</name>
    <name type="common">Human</name>
    <dbReference type="NCBI Taxonomy" id="9606"/>
    <lineage>
        <taxon>Eukaryota</taxon>
        <taxon>Metazoa</taxon>
        <taxon>Chordata</taxon>
        <taxon>Craniata</taxon>
        <taxon>Vertebrata</taxon>
        <taxon>Euteleostomi</taxon>
        <taxon>Mammalia</taxon>
        <taxon>Eutheria</taxon>
        <taxon>Euarchontoglires</taxon>
        <taxon>Primates</taxon>
        <taxon>Haplorrhini</taxon>
        <taxon>Catarrhini</taxon>
        <taxon>Hominidae</taxon>
        <taxon>Homo</taxon>
    </lineage>
</organism>
<proteinExistence type="predicted"/>
<name>CS082_HUMAN</name>
<sequence>MGRIPGGCSSKAFIGRAQWLTPVIPALWEAKGLTLLSRLECSDVIMDHCSPQLTGLRMKGFLAQTPPLEFPVHQYQPGDHVLIKSWKRESLNQLRRTSSGTLDE</sequence>
<dbReference type="EMBL" id="AK097685">
    <property type="status" value="NOT_ANNOTATED_CDS"/>
    <property type="molecule type" value="mRNA"/>
</dbReference>
<dbReference type="EMBL" id="AC008759">
    <property type="status" value="NOT_ANNOTATED_CDS"/>
    <property type="molecule type" value="Genomic_DNA"/>
</dbReference>
<dbReference type="EMBL" id="BC143540">
    <property type="status" value="NOT_ANNOTATED_CDS"/>
    <property type="molecule type" value="mRNA"/>
</dbReference>
<dbReference type="BioMuta" id="HGNC:27613"/>
<dbReference type="PeptideAtlas" id="K7EIQ3"/>
<dbReference type="AGR" id="HGNC:27613"/>
<dbReference type="GeneCards" id="ZNF561-AS1"/>
<dbReference type="HGNC" id="HGNC:27613">
    <property type="gene designation" value="ZNF561-AS1"/>
</dbReference>
<dbReference type="neXtProt" id="NX_K7EIQ3"/>
<dbReference type="InParanoid" id="K7EIQ3"/>
<dbReference type="PAN-GO" id="K7EIQ3">
    <property type="GO annotations" value="0 GO annotations based on evolutionary models"/>
</dbReference>
<dbReference type="ChiTaRS" id="ZNF561-AS1">
    <property type="organism name" value="human"/>
</dbReference>
<dbReference type="Pharos" id="K7EIQ3">
    <property type="development level" value="Tdark"/>
</dbReference>
<dbReference type="PRO" id="PR:K7EIQ3"/>
<dbReference type="Proteomes" id="UP000005640">
    <property type="component" value="Unplaced"/>
</dbReference>
<dbReference type="RNAct" id="K7EIQ3">
    <property type="molecule type" value="protein"/>
</dbReference>
<keyword id="KW-0025">Alternative splicing</keyword>
<keyword id="KW-1185">Reference proteome</keyword>
<comment type="alternative products">
    <event type="alternative splicing"/>
    <isoform>
        <id>K7EIQ3-1</id>
        <name>1</name>
        <sequence type="displayed"/>
    </isoform>
    <isoform>
        <id>K7EIQ3-2</id>
        <name>2</name>
        <sequence type="described" ref="VSP_047837"/>
    </isoform>
</comment>
<reference key="1">
    <citation type="journal article" date="2004" name="Nat. Genet.">
        <title>Complete sequencing and characterization of 21,243 full-length human cDNAs.</title>
        <authorList>
            <person name="Ota T."/>
            <person name="Suzuki Y."/>
            <person name="Nishikawa T."/>
            <person name="Otsuki T."/>
            <person name="Sugiyama T."/>
            <person name="Irie R."/>
            <person name="Wakamatsu A."/>
            <person name="Hayashi K."/>
            <person name="Sato H."/>
            <person name="Nagai K."/>
            <person name="Kimura K."/>
            <person name="Makita H."/>
            <person name="Sekine M."/>
            <person name="Obayashi M."/>
            <person name="Nishi T."/>
            <person name="Shibahara T."/>
            <person name="Tanaka T."/>
            <person name="Ishii S."/>
            <person name="Yamamoto J."/>
            <person name="Saito K."/>
            <person name="Kawai Y."/>
            <person name="Isono Y."/>
            <person name="Nakamura Y."/>
            <person name="Nagahari K."/>
            <person name="Murakami K."/>
            <person name="Yasuda T."/>
            <person name="Iwayanagi T."/>
            <person name="Wagatsuma M."/>
            <person name="Shiratori A."/>
            <person name="Sudo H."/>
            <person name="Hosoiri T."/>
            <person name="Kaku Y."/>
            <person name="Kodaira H."/>
            <person name="Kondo H."/>
            <person name="Sugawara M."/>
            <person name="Takahashi M."/>
            <person name="Kanda K."/>
            <person name="Yokoi T."/>
            <person name="Furuya T."/>
            <person name="Kikkawa E."/>
            <person name="Omura Y."/>
            <person name="Abe K."/>
            <person name="Kamihara K."/>
            <person name="Katsuta N."/>
            <person name="Sato K."/>
            <person name="Tanikawa M."/>
            <person name="Yamazaki M."/>
            <person name="Ninomiya K."/>
            <person name="Ishibashi T."/>
            <person name="Yamashita H."/>
            <person name="Murakawa K."/>
            <person name="Fujimori K."/>
            <person name="Tanai H."/>
            <person name="Kimata M."/>
            <person name="Watanabe M."/>
            <person name="Hiraoka S."/>
            <person name="Chiba Y."/>
            <person name="Ishida S."/>
            <person name="Ono Y."/>
            <person name="Takiguchi S."/>
            <person name="Watanabe S."/>
            <person name="Yosida M."/>
            <person name="Hotuta T."/>
            <person name="Kusano J."/>
            <person name="Kanehori K."/>
            <person name="Takahashi-Fujii A."/>
            <person name="Hara H."/>
            <person name="Tanase T.-O."/>
            <person name="Nomura Y."/>
            <person name="Togiya S."/>
            <person name="Komai F."/>
            <person name="Hara R."/>
            <person name="Takeuchi K."/>
            <person name="Arita M."/>
            <person name="Imose N."/>
            <person name="Musashino K."/>
            <person name="Yuuki H."/>
            <person name="Oshima A."/>
            <person name="Sasaki N."/>
            <person name="Aotsuka S."/>
            <person name="Yoshikawa Y."/>
            <person name="Matsunawa H."/>
            <person name="Ichihara T."/>
            <person name="Shiohata N."/>
            <person name="Sano S."/>
            <person name="Moriya S."/>
            <person name="Momiyama H."/>
            <person name="Satoh N."/>
            <person name="Takami S."/>
            <person name="Terashima Y."/>
            <person name="Suzuki O."/>
            <person name="Nakagawa S."/>
            <person name="Senoh A."/>
            <person name="Mizoguchi H."/>
            <person name="Goto Y."/>
            <person name="Shimizu F."/>
            <person name="Wakebe H."/>
            <person name="Hishigaki H."/>
            <person name="Watanabe T."/>
            <person name="Sugiyama A."/>
            <person name="Takemoto M."/>
            <person name="Kawakami B."/>
            <person name="Yamazaki M."/>
            <person name="Watanabe K."/>
            <person name="Kumagai A."/>
            <person name="Itakura S."/>
            <person name="Fukuzumi Y."/>
            <person name="Fujimori Y."/>
            <person name="Komiyama M."/>
            <person name="Tashiro H."/>
            <person name="Tanigami A."/>
            <person name="Fujiwara T."/>
            <person name="Ono T."/>
            <person name="Yamada K."/>
            <person name="Fujii Y."/>
            <person name="Ozaki K."/>
            <person name="Hirao M."/>
            <person name="Ohmori Y."/>
            <person name="Kawabata A."/>
            <person name="Hikiji T."/>
            <person name="Kobatake N."/>
            <person name="Inagaki H."/>
            <person name="Ikema Y."/>
            <person name="Okamoto S."/>
            <person name="Okitani R."/>
            <person name="Kawakami T."/>
            <person name="Noguchi S."/>
            <person name="Itoh T."/>
            <person name="Shigeta K."/>
            <person name="Senba T."/>
            <person name="Matsumura K."/>
            <person name="Nakajima Y."/>
            <person name="Mizuno T."/>
            <person name="Morinaga M."/>
            <person name="Sasaki M."/>
            <person name="Togashi T."/>
            <person name="Oyama M."/>
            <person name="Hata H."/>
            <person name="Watanabe M."/>
            <person name="Komatsu T."/>
            <person name="Mizushima-Sugano J."/>
            <person name="Satoh T."/>
            <person name="Shirai Y."/>
            <person name="Takahashi Y."/>
            <person name="Nakagawa K."/>
            <person name="Okumura K."/>
            <person name="Nagase T."/>
            <person name="Nomura N."/>
            <person name="Kikuchi H."/>
            <person name="Masuho Y."/>
            <person name="Yamashita R."/>
            <person name="Nakai K."/>
            <person name="Yada T."/>
            <person name="Nakamura Y."/>
            <person name="Ohara O."/>
            <person name="Isogai T."/>
            <person name="Sugano S."/>
        </authorList>
    </citation>
    <scope>NUCLEOTIDE SEQUENCE [LARGE SCALE MRNA] (ISOFORM 1)</scope>
    <source>
        <tissue>Testis</tissue>
    </source>
</reference>
<reference key="2">
    <citation type="journal article" date="2004" name="Nature">
        <title>The DNA sequence and biology of human chromosome 19.</title>
        <authorList>
            <person name="Grimwood J."/>
            <person name="Gordon L.A."/>
            <person name="Olsen A.S."/>
            <person name="Terry A."/>
            <person name="Schmutz J."/>
            <person name="Lamerdin J.E."/>
            <person name="Hellsten U."/>
            <person name="Goodstein D."/>
            <person name="Couronne O."/>
            <person name="Tran-Gyamfi M."/>
            <person name="Aerts A."/>
            <person name="Altherr M."/>
            <person name="Ashworth L."/>
            <person name="Bajorek E."/>
            <person name="Black S."/>
            <person name="Branscomb E."/>
            <person name="Caenepeel S."/>
            <person name="Carrano A.V."/>
            <person name="Caoile C."/>
            <person name="Chan Y.M."/>
            <person name="Christensen M."/>
            <person name="Cleland C.A."/>
            <person name="Copeland A."/>
            <person name="Dalin E."/>
            <person name="Dehal P."/>
            <person name="Denys M."/>
            <person name="Detter J.C."/>
            <person name="Escobar J."/>
            <person name="Flowers D."/>
            <person name="Fotopulos D."/>
            <person name="Garcia C."/>
            <person name="Georgescu A.M."/>
            <person name="Glavina T."/>
            <person name="Gomez M."/>
            <person name="Gonzales E."/>
            <person name="Groza M."/>
            <person name="Hammon N."/>
            <person name="Hawkins T."/>
            <person name="Haydu L."/>
            <person name="Ho I."/>
            <person name="Huang W."/>
            <person name="Israni S."/>
            <person name="Jett J."/>
            <person name="Kadner K."/>
            <person name="Kimball H."/>
            <person name="Kobayashi A."/>
            <person name="Larionov V."/>
            <person name="Leem S.-H."/>
            <person name="Lopez F."/>
            <person name="Lou Y."/>
            <person name="Lowry S."/>
            <person name="Malfatti S."/>
            <person name="Martinez D."/>
            <person name="McCready P.M."/>
            <person name="Medina C."/>
            <person name="Morgan J."/>
            <person name="Nelson K."/>
            <person name="Nolan M."/>
            <person name="Ovcharenko I."/>
            <person name="Pitluck S."/>
            <person name="Pollard M."/>
            <person name="Popkie A.P."/>
            <person name="Predki P."/>
            <person name="Quan G."/>
            <person name="Ramirez L."/>
            <person name="Rash S."/>
            <person name="Retterer J."/>
            <person name="Rodriguez A."/>
            <person name="Rogers S."/>
            <person name="Salamov A."/>
            <person name="Salazar A."/>
            <person name="She X."/>
            <person name="Smith D."/>
            <person name="Slezak T."/>
            <person name="Solovyev V."/>
            <person name="Thayer N."/>
            <person name="Tice H."/>
            <person name="Tsai M."/>
            <person name="Ustaszewska A."/>
            <person name="Vo N."/>
            <person name="Wagner M."/>
            <person name="Wheeler J."/>
            <person name="Wu K."/>
            <person name="Xie G."/>
            <person name="Yang J."/>
            <person name="Dubchak I."/>
            <person name="Furey T.S."/>
            <person name="DeJong P."/>
            <person name="Dickson M."/>
            <person name="Gordon D."/>
            <person name="Eichler E.E."/>
            <person name="Pennacchio L.A."/>
            <person name="Richardson P."/>
            <person name="Stubbs L."/>
            <person name="Rokhsar D.S."/>
            <person name="Myers R.M."/>
            <person name="Rubin E.M."/>
            <person name="Lucas S.M."/>
        </authorList>
    </citation>
    <scope>NUCLEOTIDE SEQUENCE [LARGE SCALE GENOMIC DNA]</scope>
</reference>
<reference key="3">
    <citation type="journal article" date="2004" name="Genome Res.">
        <title>The status, quality, and expansion of the NIH full-length cDNA project: the Mammalian Gene Collection (MGC).</title>
        <authorList>
            <consortium name="The MGC Project Team"/>
        </authorList>
    </citation>
    <scope>NUCLEOTIDE SEQUENCE [LARGE SCALE MRNA] (ISOFORM 2)</scope>
</reference>